<protein>
    <recommendedName>
        <fullName evidence="1">Protein Ycf2</fullName>
    </recommendedName>
</protein>
<keyword id="KW-0067">ATP-binding</keyword>
<keyword id="KW-0150">Chloroplast</keyword>
<keyword id="KW-0547">Nucleotide-binding</keyword>
<keyword id="KW-0934">Plastid</keyword>
<sequence length="2264" mass="265917">MTGHEFKSWILELREILREIKNSHYFLDSWTQFNSVGSFIHIFFHQERFIKLFDSRIWSILLSHNSQGSTSNRYFTIKGVILFGVAVLIYRINNRNMVERKNLYLIGLLPIPMNSIGPRNDTLEESVGSSNINRLIVSLLYLPKGKKIYESSFLNPKESTWVLPITKKCSMPESNWGSRWWRDWIGKKRDSSCKISNETVAGIEILFKEKDLKYLEFFFVYYRDDPIRKDHDWELFDRLSLRKRQNRINLNSGPLFEILVKHWICYLMSAFREKIPIEVEGFFKQQGAGSTIKSNDIEHVSHLFSRNKSAISLQNCAQFHMWQFRQDLFVSWGKNPPESDLLRNVSRENLIWLDNVWLVNKDRFFRKVRNVSSNIQYDSTRSSFVQVRDSSQLKGSSDQSRDHFDSISNEDSEYHTLINQREIQQLKERSILWDPSFLQTEGTEIESNRFPKCLSGYSSMSRLFTEREKQMINHLLPEEIEEFLGNPTRSVRSFFSDRWSEFHLGSNPTERSTRDQKLLKKQQDLSFLRRSENKEMVNLFKIITYLQNTVSIHPISSDSGCDMVPKDEPDMDSSNKISFLNKNPFFDLFHLFHDRNRGGYTLHHDFESEERFQELADLFTLSITEPDLVYHKRFAFSIDSYGLDPKQFLNGVFNSRYEWKTTSLLVLLVLLPIFYEENESFYRRIRKKRVRISCGNDLEEPKPKIVVFASNNIMEAANQYRLIRNLIQIQHSTHRYIRNVLNRFFLMNRSDRNFKYGIQRDQIGKDTLNHRTLMKYMINQHLSNLKKSQKRWFDPLIFFSRTKRSMNRDPDAYRYKWSTGSKNFQEHFVSEQKSRFQVVFDRLRINQYSIDWSEVIDKKDLSKPLRFFLSKLLLFLSNSLPFLFVSFGNIPIHRSEIYIYELKGPNDPQFLESIGLQIVHLKKLKPFLLDDHETCQKSKFLINGGTISPFLFNKIPKWMIDSFHTRNNRRKSFDNTDSYFSMIFHDQYNWLNPVKSFHRSSLRSSFYKANQLRFLNNPHHFCFYCNKRFPFYVEKARINNYDFTYGQFLNILFIRNKIFSLCVGKKKHAFWGRDTISAIESQVSNIFIPKAFPQSGDETYNLYKSFHFPSRSNPFVRRAIYSIADISGTPLTEGQIVNFERTYCQPLSDMNLSDSEGKNLYQYLNFNSNMGLIHTPCYEKYLPSEKRKKRSLCLKKCVEKGQMYRTFQRDSAYSTLSKWNLFQTYMPWFLTSTGYRYLKFLFLDTFSDLLPILSSSQKFVSIFHDIMHGSNISWRILQKKFCLPQRNLISEISSKCLHNLLLSEEMIHRNNESPLISTHLTNVREFLYAILFLLLVAAYLACTRLLFVFGASSELQTEFEKVKSLMIPSSMIELRKLLDRYPTSEPNSFWFLKQLGDSLGGNMLLGGGPAYRVKSIRSKKKYLNINLIDIIDLISIIPNPINRITFSRNTRHLSHTSKEIYSLIRKRKNVNGDWIDDKIESWVANSDSIDDEKREFLVQFSTLTTEKRIDQILLSLTHSDHFSKNDSGYQMIEQPGAIYLRYLVDIHKKYLMNYEFNTSSLAERRIFLAHYQTITYSQTSCGANSLHFPSHGKPFSLRLALSLSRGTLVIGSIGTGRSYLVKYLAKNSYLPFITVFLNKSLDNKSQGFDNIDVDASDDSDASDDIDASDDILDMELELLTSMNALTMDMMPEDEDLLYITLQFELAKAMSPCIIWIPNIHDLDVNESNYLSPGLLVNLLSRDYETRNILVIASTHIPQKVDPALIAPNKLNTCIKIRRLLIPQQRKHFFTLSYTRGFHLEKKMFHTNGFGSITMGSNARDLVALTNEALSISITQNKSIIDTNTIRSALHRQIWDLRSQVRSVQDHGILFYKIGRAVAQNVLLSNCPIDPISIYMKKKSCNEVDYYLYNWYFELGTSMKKLTILLYLLSCSAGSVTQDLWSLPGPDEKNGITPYGLVENDSGLVRGLLEVEGALVGSSRTCSQFDKDRVTLLLRPEPRNPLDMMQNGSCSILDQRFLYEKDESEFEEGDERQQIEEDLFNHIVWAPRIWRPWGFLFDCIERPNELGFPYWSRSFRGKRIVYDEEDELQENDSEFLQNGTVQYQTRDISSKEQGLFRISQFIWDPADPLFFLFKAQPFVSVFSHRELFADEEMSKGLLTPQKNRPTSLYKRWFIKKTQEKHFELLINRQRWLRTNRSLSNGSFRSNTLSESYQYLSNLFLSNGTLLDQMTKALLRKRWLFPDEMQIGFMEQDKDFPFLSQKDMWP</sequence>
<name>YCF2_LACSA</name>
<accession>Q332R7</accession>
<geneLocation type="chloroplast"/>
<organism>
    <name type="scientific">Lactuca sativa</name>
    <name type="common">Garden lettuce</name>
    <dbReference type="NCBI Taxonomy" id="4236"/>
    <lineage>
        <taxon>Eukaryota</taxon>
        <taxon>Viridiplantae</taxon>
        <taxon>Streptophyta</taxon>
        <taxon>Embryophyta</taxon>
        <taxon>Tracheophyta</taxon>
        <taxon>Spermatophyta</taxon>
        <taxon>Magnoliopsida</taxon>
        <taxon>eudicotyledons</taxon>
        <taxon>Gunneridae</taxon>
        <taxon>Pentapetalae</taxon>
        <taxon>asterids</taxon>
        <taxon>campanulids</taxon>
        <taxon>Asterales</taxon>
        <taxon>Asteraceae</taxon>
        <taxon>Cichorioideae</taxon>
        <taxon>Cichorieae</taxon>
        <taxon>Lactucinae</taxon>
        <taxon>Lactuca</taxon>
    </lineage>
</organism>
<gene>
    <name evidence="1" type="primary">ycf2-A</name>
</gene>
<gene>
    <name evidence="1" type="primary">ycf2-B</name>
</gene>
<proteinExistence type="inferred from homology"/>
<dbReference type="EMBL" id="AP007232">
    <property type="protein sequence ID" value="BAE47639.1"/>
    <property type="molecule type" value="Genomic_DNA"/>
</dbReference>
<dbReference type="EMBL" id="AP007232">
    <property type="protein sequence ID" value="BAE47655.1"/>
    <property type="molecule type" value="Genomic_DNA"/>
</dbReference>
<dbReference type="EMBL" id="DQ383816">
    <property type="protein sequence ID" value="ABD47276.1"/>
    <property type="molecule type" value="Genomic_DNA"/>
</dbReference>
<dbReference type="EMBL" id="DQ383816">
    <property type="protein sequence ID" value="ABD47296.1"/>
    <property type="molecule type" value="Genomic_DNA"/>
</dbReference>
<dbReference type="KEGG" id="lsv:3772783"/>
<dbReference type="KEGG" id="lsv:3772784"/>
<dbReference type="OrthoDB" id="1669967at2759"/>
<dbReference type="GO" id="GO:0009570">
    <property type="term" value="C:chloroplast stroma"/>
    <property type="evidence" value="ECO:0007669"/>
    <property type="project" value="UniProtKB-SubCell"/>
</dbReference>
<dbReference type="GO" id="GO:0005524">
    <property type="term" value="F:ATP binding"/>
    <property type="evidence" value="ECO:0007669"/>
    <property type="project" value="UniProtKB-KW"/>
</dbReference>
<dbReference type="GO" id="GO:0016887">
    <property type="term" value="F:ATP hydrolysis activity"/>
    <property type="evidence" value="ECO:0007669"/>
    <property type="project" value="InterPro"/>
</dbReference>
<dbReference type="CDD" id="cd19505">
    <property type="entry name" value="RecA-like_Ycf2"/>
    <property type="match status" value="1"/>
</dbReference>
<dbReference type="Gene3D" id="3.40.50.300">
    <property type="entry name" value="P-loop containing nucleotide triphosphate hydrolases"/>
    <property type="match status" value="1"/>
</dbReference>
<dbReference type="HAMAP" id="MF_01330">
    <property type="entry name" value="Ycf2"/>
    <property type="match status" value="1"/>
</dbReference>
<dbReference type="InterPro" id="IPR003593">
    <property type="entry name" value="AAA+_ATPase"/>
</dbReference>
<dbReference type="InterPro" id="IPR003959">
    <property type="entry name" value="ATPase_AAA_core"/>
</dbReference>
<dbReference type="InterPro" id="IPR027417">
    <property type="entry name" value="P-loop_NTPase"/>
</dbReference>
<dbReference type="InterPro" id="IPR008543">
    <property type="entry name" value="Uncharacterised_Ycf2"/>
</dbReference>
<dbReference type="InterPro" id="IPR056777">
    <property type="entry name" value="Ycf2_N"/>
</dbReference>
<dbReference type="PANTHER" id="PTHR33078:SF51">
    <property type="entry name" value="PROTEIN TIC 214"/>
    <property type="match status" value="1"/>
</dbReference>
<dbReference type="PANTHER" id="PTHR33078">
    <property type="entry name" value="PROTEIN YCF2-RELATED"/>
    <property type="match status" value="1"/>
</dbReference>
<dbReference type="Pfam" id="PF00004">
    <property type="entry name" value="AAA"/>
    <property type="match status" value="1"/>
</dbReference>
<dbReference type="Pfam" id="PF05695">
    <property type="entry name" value="Ycf2"/>
    <property type="match status" value="1"/>
</dbReference>
<dbReference type="SMART" id="SM00382">
    <property type="entry name" value="AAA"/>
    <property type="match status" value="1"/>
</dbReference>
<dbReference type="SUPFAM" id="SSF52540">
    <property type="entry name" value="P-loop containing nucleoside triphosphate hydrolases"/>
    <property type="match status" value="1"/>
</dbReference>
<evidence type="ECO:0000255" key="1">
    <source>
        <dbReference type="HAMAP-Rule" id="MF_01330"/>
    </source>
</evidence>
<feature type="chain" id="PRO_0000242533" description="Protein Ycf2">
    <location>
        <begin position="1"/>
        <end position="2264"/>
    </location>
</feature>
<feature type="binding site" evidence="1">
    <location>
        <begin position="1611"/>
        <end position="1618"/>
    </location>
    <ligand>
        <name>ATP</name>
        <dbReference type="ChEBI" id="CHEBI:30616"/>
    </ligand>
</feature>
<reference key="1">
    <citation type="journal article" date="2006" name="Transgenic Res.">
        <title>Efficient and stable transformation of Lactuca sativa L. cv. Cisco (lettuce) plastids.</title>
        <authorList>
            <person name="Kanamoto H."/>
            <person name="Yamashita A."/>
            <person name="Asao H."/>
            <person name="Okumura S."/>
            <person name="Takase H."/>
            <person name="Hattori M."/>
            <person name="Yokota A."/>
            <person name="Tomizawa K."/>
        </authorList>
    </citation>
    <scope>NUCLEOTIDE SEQUENCE [LARGE SCALE GENOMIC DNA]</scope>
    <source>
        <strain>cv. Cisco</strain>
    </source>
</reference>
<reference key="2">
    <citation type="submission" date="2006-01" db="EMBL/GenBank/DDBJ databases">
        <title>A comparison of the first two published chloroplast genomes in Asteraceae: Lactuca and Helianthus.</title>
        <authorList>
            <person name="Timme R.E."/>
            <person name="Kuehl J.V."/>
            <person name="Boore J.L."/>
            <person name="Jansen R.K."/>
        </authorList>
    </citation>
    <scope>NUCLEOTIDE SEQUENCE [LARGE SCALE GENOMIC DNA]</scope>
    <source>
        <strain>cv. Salinas</strain>
    </source>
</reference>
<comment type="function">
    <text>Probable ATPase of unknown function. Its presence in a non-photosynthetic plant (Epifagus virginiana) and experiments in tobacco indicate that it has an essential function which is probably not related to photosynthesis.</text>
</comment>
<comment type="subcellular location">
    <subcellularLocation>
        <location evidence="1">Plastid</location>
        <location evidence="1">Chloroplast stroma</location>
    </subcellularLocation>
</comment>
<comment type="similarity">
    <text evidence="1">Belongs to the Ycf2 family.</text>
</comment>